<protein>
    <recommendedName>
        <fullName>Acetyl-CoA-benzylalcohol acetyltransferase</fullName>
        <shortName>CbBEAT-1</shortName>
        <ecNumber>2.3.1.224</ecNumber>
    </recommendedName>
</protein>
<proteinExistence type="evidence at protein level"/>
<gene>
    <name type="primary">BEAT</name>
</gene>
<keyword id="KW-0012">Acyltransferase</keyword>
<keyword id="KW-0903">Direct protein sequencing</keyword>
<keyword id="KW-0808">Transferase</keyword>
<organism>
    <name type="scientific">Clarkia breweri</name>
    <name type="common">Fairy fans</name>
    <name type="synonym">Eucharidium breweri</name>
    <dbReference type="NCBI Taxonomy" id="36903"/>
    <lineage>
        <taxon>Eukaryota</taxon>
        <taxon>Viridiplantae</taxon>
        <taxon>Streptophyta</taxon>
        <taxon>Embryophyta</taxon>
        <taxon>Tracheophyta</taxon>
        <taxon>Spermatophyta</taxon>
        <taxon>Magnoliopsida</taxon>
        <taxon>eudicotyledons</taxon>
        <taxon>Gunneridae</taxon>
        <taxon>Pentapetalae</taxon>
        <taxon>rosids</taxon>
        <taxon>malvids</taxon>
        <taxon>Myrtales</taxon>
        <taxon>Onagraceae</taxon>
        <taxon>Onagroideae</taxon>
        <taxon>Onagreae</taxon>
        <taxon>Clarkia</taxon>
    </lineage>
</organism>
<name>BEATH_CLABR</name>
<accession>O64988</accession>
<dbReference type="EC" id="2.3.1.224"/>
<dbReference type="EMBL" id="AF043464">
    <property type="protein sequence ID" value="AAC18062.1"/>
    <property type="molecule type" value="mRNA"/>
</dbReference>
<dbReference type="SMR" id="O64988"/>
<dbReference type="KEGG" id="ag:AAC18062"/>
<dbReference type="BRENDA" id="2.3.1.224">
    <property type="organism ID" value="1437"/>
</dbReference>
<dbReference type="SABIO-RK" id="O64988"/>
<dbReference type="GO" id="GO:0102720">
    <property type="term" value="F:acetyl-coenzyme A:acetyl alcohol acetyltransferase activity"/>
    <property type="evidence" value="ECO:0007669"/>
    <property type="project" value="UniProtKB-EC"/>
</dbReference>
<dbReference type="Gene3D" id="3.30.559.10">
    <property type="entry name" value="Chloramphenicol acetyltransferase-like domain"/>
    <property type="match status" value="2"/>
</dbReference>
<dbReference type="InterPro" id="IPR023213">
    <property type="entry name" value="CAT-like_dom_sf"/>
</dbReference>
<dbReference type="PANTHER" id="PTHR31623:SF83">
    <property type="entry name" value="ACETYL-COA-BENZYLALCOHOL ACETYLTRANSFERASE-LIKE"/>
    <property type="match status" value="1"/>
</dbReference>
<dbReference type="PANTHER" id="PTHR31623">
    <property type="entry name" value="F21J9.9"/>
    <property type="match status" value="1"/>
</dbReference>
<dbReference type="Pfam" id="PF02458">
    <property type="entry name" value="Transferase"/>
    <property type="match status" value="1"/>
</dbReference>
<comment type="function">
    <text evidence="3 4">Involved in the biosynthesis of benzyl acetate, a major constituent of the floral scent. Can use benzylalcohol, cinnamylalcohol, 3-cis-hexene-1-ol or heptanol as substrates. Has some activity with 2-phenylethanol and 2-naphtalene-ethanol, but no activity with linalool, 2-hydroxybenzylalcohol, 3-hydroxybenzylalcohol or 4-hydroxybenzylalcohol.</text>
</comment>
<comment type="catalytic activity">
    <reaction>
        <text>benzyl alcohol + acetyl-CoA = benzyl acetate + CoA</text>
        <dbReference type="Rhea" id="RHEA:36147"/>
        <dbReference type="ChEBI" id="CHEBI:17987"/>
        <dbReference type="ChEBI" id="CHEBI:52051"/>
        <dbReference type="ChEBI" id="CHEBI:57287"/>
        <dbReference type="ChEBI" id="CHEBI:57288"/>
        <dbReference type="EC" id="2.3.1.224"/>
    </reaction>
</comment>
<comment type="catalytic activity">
    <reaction>
        <text>(E)-cinnamyl alcohol + acetyl-CoA = (E)-cinnamyl acetate + CoA</text>
        <dbReference type="Rhea" id="RHEA:36151"/>
        <dbReference type="ChEBI" id="CHEBI:33227"/>
        <dbReference type="ChEBI" id="CHEBI:57287"/>
        <dbReference type="ChEBI" id="CHEBI:57288"/>
        <dbReference type="ChEBI" id="CHEBI:156069"/>
        <dbReference type="EC" id="2.3.1.224"/>
    </reaction>
</comment>
<comment type="biophysicochemical properties">
    <kinetics>
        <KM evidence="3">240 uM for benzyl alcohol</KM>
        <KM evidence="3">24 uM for acetyl-CoA</KM>
        <Vmax evidence="3">556.0 pmol/sec/mg enzyme</Vmax>
    </kinetics>
</comment>
<comment type="tissue specificity">
    <text evidence="4">Expressed in petals, style, sepals and stamens. Very low expression in stigma and not detected in leaves.</text>
</comment>
<comment type="developmental stage">
    <text evidence="3 4">Expression in petals peaks on the day of anthesis.</text>
</comment>
<comment type="PTM">
    <text>The N-terminus is blocked.</text>
</comment>
<comment type="similarity">
    <text evidence="5">Belongs to the plant acyltransferase family.</text>
</comment>
<comment type="caution">
    <text evidence="6">The cv. non-scented line contains a lower amount of the protein (AC Q9SPU3) and a lower activity, even though it has similar levels of mRNA (PubMed:10588064).</text>
</comment>
<sequence length="433" mass="48198">MNVTMHSKKLLKPSIPTPNHLQKLNLSLLDQIQIPFYVGLIFHYETLSDNSDITLSKLESSLSETLTLYYHVAGRYNGTDCVIECNDQGIGYVETAFDVELHQFLLGEESNNLDLLVGLSGFLSETETPPLAAIQLNMFKCGGLVIGAQFNHIIGDMFTMSTFMNSWAKACRVGIKEVAHPTFGLAPLMPSAKVLNIPPPPSFEGVKFVSKRFVFNENAITRLRKEATEEDGDGDDDQKKKRPSRVDLVTAFLSKSLIEMDCAKKEQTKSRPSLMVHMMNLRKRTKLALENDVSGNFFIVVNAESKITVAPKITDLTESLGSACGEIISEVAKVDDAEVVSSMVLNSVREFYYEWGKGEKNVFLYTSWCRFPLYEVDFGWGIPSLVDTTAVPFGLIVLMDEAPAGDGIAVRACLSEHDMIQFQQHHQLLSYVS</sequence>
<evidence type="ECO:0000250" key="1"/>
<evidence type="ECO:0000255" key="2"/>
<evidence type="ECO:0000269" key="3">
    <source>
    </source>
</evidence>
<evidence type="ECO:0000269" key="4">
    <source>
    </source>
</evidence>
<evidence type="ECO:0000305" key="5"/>
<evidence type="ECO:0000305" key="6">
    <source>
    </source>
</evidence>
<reference key="1">
    <citation type="journal article" date="1998" name="Plant J.">
        <title>Acetyl-CoA:benzylalcohol acetyltransferase--an enzyme involved in floral scent production in Clarkia breweri.</title>
        <authorList>
            <person name="Dudareva N."/>
            <person name="D'Auria J.C."/>
            <person name="Nam K.H."/>
            <person name="Raguso R.A."/>
            <person name="Pichersky E."/>
        </authorList>
    </citation>
    <scope>NUCLEOTIDE SEQUENCE [MRNA]</scope>
    <scope>PROTEIN SEQUENCE OF 189-210; 279-306 AND 343-379</scope>
    <scope>FUNCTION</scope>
    <scope>SUBSTRATE SPECIFICITY</scope>
    <scope>CATALYTIC ACTIVITY</scope>
    <scope>TISSUE SPECIFICITY</scope>
    <scope>DEVELOPMENTAL STAGE</scope>
    <source>
        <strain>cv. scented line</strain>
    </source>
</reference>
<reference key="2">
    <citation type="journal article" date="1999" name="Plant Cell Physiol.">
        <title>Characterization of benzylalcohol acetyltransferases in scented and non-scented Clarkia species.</title>
        <authorList>
            <person name="Nam K.H."/>
            <person name="Dudareva N."/>
            <person name="Pichersky E."/>
        </authorList>
    </citation>
    <scope>FUNCTION</scope>
    <scope>CATALYTIC ACTIVITY</scope>
    <scope>SUBSTRATE SPECIFICITY</scope>
    <scope>BIOPHYSICOCHEMICAL PROPERTIES</scope>
    <scope>DEVELOPMENTAL STAGE</scope>
    <source>
        <strain>cv. scented line</strain>
    </source>
</reference>
<feature type="chain" id="PRO_0000424078" description="Acetyl-CoA-benzylalcohol acetyltransferase">
    <location>
        <begin position="1"/>
        <end position="433"/>
    </location>
</feature>
<feature type="active site" description="Proton acceptor" evidence="1">
    <location>
        <position position="152"/>
    </location>
</feature>
<feature type="active site" description="Proton acceptor" evidence="2">
    <location>
        <position position="377"/>
    </location>
</feature>